<proteinExistence type="inferred from homology"/>
<name>MDTK_SALSV</name>
<keyword id="KW-0050">Antiport</keyword>
<keyword id="KW-0997">Cell inner membrane</keyword>
<keyword id="KW-1003">Cell membrane</keyword>
<keyword id="KW-0406">Ion transport</keyword>
<keyword id="KW-0472">Membrane</keyword>
<keyword id="KW-0915">Sodium</keyword>
<keyword id="KW-0739">Sodium transport</keyword>
<keyword id="KW-0812">Transmembrane</keyword>
<keyword id="KW-1133">Transmembrane helix</keyword>
<keyword id="KW-0813">Transport</keyword>
<organism>
    <name type="scientific">Salmonella schwarzengrund (strain CVM19633)</name>
    <dbReference type="NCBI Taxonomy" id="439843"/>
    <lineage>
        <taxon>Bacteria</taxon>
        <taxon>Pseudomonadati</taxon>
        <taxon>Pseudomonadota</taxon>
        <taxon>Gammaproteobacteria</taxon>
        <taxon>Enterobacterales</taxon>
        <taxon>Enterobacteriaceae</taxon>
        <taxon>Salmonella</taxon>
    </lineage>
</organism>
<comment type="function">
    <text evidence="1">Multidrug efflux pump that functions probably as a Na(+)/drug antiporter.</text>
</comment>
<comment type="subcellular location">
    <subcellularLocation>
        <location evidence="1">Cell inner membrane</location>
        <topology evidence="1">Multi-pass membrane protein</topology>
    </subcellularLocation>
</comment>
<comment type="similarity">
    <text evidence="1">Belongs to the multi antimicrobial extrusion (MATE) (TC 2.A.66.1) family. MdtK subfamily.</text>
</comment>
<protein>
    <recommendedName>
        <fullName evidence="1">Multidrug resistance protein MdtK</fullName>
    </recommendedName>
    <alternativeName>
        <fullName evidence="1">Multidrug-efflux transporter</fullName>
    </alternativeName>
</protein>
<reference key="1">
    <citation type="journal article" date="2011" name="J. Bacteriol.">
        <title>Comparative genomics of 28 Salmonella enterica isolates: evidence for CRISPR-mediated adaptive sublineage evolution.</title>
        <authorList>
            <person name="Fricke W.F."/>
            <person name="Mammel M.K."/>
            <person name="McDermott P.F."/>
            <person name="Tartera C."/>
            <person name="White D.G."/>
            <person name="Leclerc J.E."/>
            <person name="Ravel J."/>
            <person name="Cebula T.A."/>
        </authorList>
    </citation>
    <scope>NUCLEOTIDE SEQUENCE [LARGE SCALE GENOMIC DNA]</scope>
    <source>
        <strain>CVM19633</strain>
    </source>
</reference>
<dbReference type="EMBL" id="CP001127">
    <property type="protein sequence ID" value="ACF93055.1"/>
    <property type="molecule type" value="Genomic_DNA"/>
</dbReference>
<dbReference type="RefSeq" id="WP_001175081.1">
    <property type="nucleotide sequence ID" value="NC_011094.1"/>
</dbReference>
<dbReference type="SMR" id="B4TUY3"/>
<dbReference type="KEGG" id="sew:SeSA_A1521"/>
<dbReference type="HOGENOM" id="CLU_012893_6_0_6"/>
<dbReference type="Proteomes" id="UP000001865">
    <property type="component" value="Chromosome"/>
</dbReference>
<dbReference type="GO" id="GO:0005886">
    <property type="term" value="C:plasma membrane"/>
    <property type="evidence" value="ECO:0007669"/>
    <property type="project" value="UniProtKB-SubCell"/>
</dbReference>
<dbReference type="GO" id="GO:0015297">
    <property type="term" value="F:antiporter activity"/>
    <property type="evidence" value="ECO:0007669"/>
    <property type="project" value="UniProtKB-UniRule"/>
</dbReference>
<dbReference type="GO" id="GO:0042910">
    <property type="term" value="F:xenobiotic transmembrane transporter activity"/>
    <property type="evidence" value="ECO:0007669"/>
    <property type="project" value="UniProtKB-UniRule"/>
</dbReference>
<dbReference type="GO" id="GO:0006814">
    <property type="term" value="P:sodium ion transport"/>
    <property type="evidence" value="ECO:0007669"/>
    <property type="project" value="UniProtKB-UniRule"/>
</dbReference>
<dbReference type="GO" id="GO:0006855">
    <property type="term" value="P:xenobiotic transmembrane transport"/>
    <property type="evidence" value="ECO:0007669"/>
    <property type="project" value="UniProtKB-UniRule"/>
</dbReference>
<dbReference type="CDD" id="cd13131">
    <property type="entry name" value="MATE_NorM_like"/>
    <property type="match status" value="1"/>
</dbReference>
<dbReference type="HAMAP" id="MF_00400">
    <property type="entry name" value="MdtK"/>
    <property type="match status" value="1"/>
</dbReference>
<dbReference type="InterPro" id="IPR002528">
    <property type="entry name" value="MATE_fam"/>
</dbReference>
<dbReference type="InterPro" id="IPR050222">
    <property type="entry name" value="MATE_MdtK"/>
</dbReference>
<dbReference type="InterPro" id="IPR048279">
    <property type="entry name" value="MdtK-like"/>
</dbReference>
<dbReference type="InterPro" id="IPR022913">
    <property type="entry name" value="Multidrug-R_MdtK"/>
</dbReference>
<dbReference type="NCBIfam" id="TIGR00797">
    <property type="entry name" value="matE"/>
    <property type="match status" value="1"/>
</dbReference>
<dbReference type="PANTHER" id="PTHR43298:SF2">
    <property type="entry name" value="FMN_FAD EXPORTER YEEO-RELATED"/>
    <property type="match status" value="1"/>
</dbReference>
<dbReference type="PANTHER" id="PTHR43298">
    <property type="entry name" value="MULTIDRUG RESISTANCE PROTEIN NORM-RELATED"/>
    <property type="match status" value="1"/>
</dbReference>
<dbReference type="Pfam" id="PF01554">
    <property type="entry name" value="MatE"/>
    <property type="match status" value="2"/>
</dbReference>
<dbReference type="PIRSF" id="PIRSF006603">
    <property type="entry name" value="DinF"/>
    <property type="match status" value="1"/>
</dbReference>
<gene>
    <name evidence="1" type="primary">mdtK</name>
    <name type="ordered locus">SeSA_A1521</name>
</gene>
<accession>B4TUY3</accession>
<evidence type="ECO:0000255" key="1">
    <source>
        <dbReference type="HAMAP-Rule" id="MF_00400"/>
    </source>
</evidence>
<sequence>MQKYTSEARQLLALAIPVILAQVAQTAMGFVDTVMAGGYSATDMAAVAIGTSIWLPAILFGHGLLLALTPVIAQLNGSGRRERIAHQVRQGFWLAGFVSVLVMIVLWNAGYIIRSMHNIDPALADKAVGYLRALLWGAPGYLFFQVARNQCEGLAKTKPGMVMGFLGLLVNIPVNYIFIYGHFGMPELGGIGCGVATAAVYWVMFIAMLSYIKHARSMRDIRNETGFGKPDSVVMKRLIQLGLPIALALFFEVTLFAVVALLVSPLGIVDVAGHQIALNFSSLMFVLPMSLAAAVTIRVGYRLGQGSTLDAQTAARTGLGVGICMAVVTAIFTVTLRKHIALLYNDNPEVVALAAQLMLLAAVYQISDSIQVIGSGILRGYKDTRSIFFITFTAYWVLGLPSGYILALTDLVVDRMGPAGFWMGFIIGLTSAAVLMMLRMRYLQRQPSAIILQRAAR</sequence>
<feature type="chain" id="PRO_1000191107" description="Multidrug resistance protein MdtK">
    <location>
        <begin position="1"/>
        <end position="457"/>
    </location>
</feature>
<feature type="transmembrane region" description="Helical" evidence="1">
    <location>
        <begin position="11"/>
        <end position="31"/>
    </location>
</feature>
<feature type="transmembrane region" description="Helical" evidence="1">
    <location>
        <begin position="53"/>
        <end position="73"/>
    </location>
</feature>
<feature type="transmembrane region" description="Helical" evidence="1">
    <location>
        <begin position="93"/>
        <end position="113"/>
    </location>
</feature>
<feature type="transmembrane region" description="Helical" evidence="1">
    <location>
        <begin position="127"/>
        <end position="147"/>
    </location>
</feature>
<feature type="transmembrane region" description="Helical" evidence="1">
    <location>
        <begin position="160"/>
        <end position="180"/>
    </location>
</feature>
<feature type="transmembrane region" description="Helical" evidence="1">
    <location>
        <begin position="188"/>
        <end position="208"/>
    </location>
</feature>
<feature type="transmembrane region" description="Helical" evidence="1">
    <location>
        <begin position="243"/>
        <end position="263"/>
    </location>
</feature>
<feature type="transmembrane region" description="Helical" evidence="1">
    <location>
        <begin position="276"/>
        <end position="296"/>
    </location>
</feature>
<feature type="transmembrane region" description="Helical" evidence="1">
    <location>
        <begin position="314"/>
        <end position="334"/>
    </location>
</feature>
<feature type="transmembrane region" description="Helical" evidence="1">
    <location>
        <begin position="350"/>
        <end position="370"/>
    </location>
</feature>
<feature type="transmembrane region" description="Helical" evidence="1">
    <location>
        <begin position="387"/>
        <end position="407"/>
    </location>
</feature>
<feature type="transmembrane region" description="Helical" evidence="1">
    <location>
        <begin position="418"/>
        <end position="438"/>
    </location>
</feature>